<keyword id="KW-0012">Acyltransferase</keyword>
<keyword id="KW-0963">Cytoplasm</keyword>
<keyword id="KW-0408">Iron</keyword>
<keyword id="KW-0479">Metal-binding</keyword>
<keyword id="KW-0808">Transferase</keyword>
<keyword id="KW-0819">tRNA processing</keyword>
<gene>
    <name evidence="1" type="primary">kae1</name>
    <name type="ordered locus">Tneu_1199</name>
</gene>
<proteinExistence type="inferred from homology"/>
<reference key="1">
    <citation type="submission" date="2008-03" db="EMBL/GenBank/DDBJ databases">
        <title>Complete sequence of Thermoproteus neutrophilus V24Sta.</title>
        <authorList>
            <consortium name="US DOE Joint Genome Institute"/>
            <person name="Copeland A."/>
            <person name="Lucas S."/>
            <person name="Lapidus A."/>
            <person name="Glavina del Rio T."/>
            <person name="Dalin E."/>
            <person name="Tice H."/>
            <person name="Bruce D."/>
            <person name="Goodwin L."/>
            <person name="Pitluck S."/>
            <person name="Sims D."/>
            <person name="Brettin T."/>
            <person name="Detter J.C."/>
            <person name="Han C."/>
            <person name="Kuske C.R."/>
            <person name="Schmutz J."/>
            <person name="Larimer F."/>
            <person name="Land M."/>
            <person name="Hauser L."/>
            <person name="Kyrpides N."/>
            <person name="Mikhailova N."/>
            <person name="Biddle J.F."/>
            <person name="Zhang Z."/>
            <person name="Fitz-Gibbon S.T."/>
            <person name="Lowe T.M."/>
            <person name="Saltikov C."/>
            <person name="House C.H."/>
            <person name="Richardson P."/>
        </authorList>
    </citation>
    <scope>NUCLEOTIDE SEQUENCE [LARGE SCALE GENOMIC DNA]</scope>
    <source>
        <strain>DSM 2338 / JCM 9278 / NBRC 100436 / V24Sta</strain>
    </source>
</reference>
<comment type="function">
    <text evidence="1">Required for the formation of a threonylcarbamoyl group on adenosine at position 37 (t(6)A37) in tRNAs that read codons beginning with adenine. Is probably involved in the transfer of the threonylcarbamoyl moiety of threonylcarbamoyl-AMP (TC-AMP) to the N6 group of A37.</text>
</comment>
<comment type="catalytic activity">
    <reaction evidence="1">
        <text>L-threonylcarbamoyladenylate + adenosine(37) in tRNA = N(6)-L-threonylcarbamoyladenosine(37) in tRNA + AMP + H(+)</text>
        <dbReference type="Rhea" id="RHEA:37059"/>
        <dbReference type="Rhea" id="RHEA-COMP:10162"/>
        <dbReference type="Rhea" id="RHEA-COMP:10163"/>
        <dbReference type="ChEBI" id="CHEBI:15378"/>
        <dbReference type="ChEBI" id="CHEBI:73682"/>
        <dbReference type="ChEBI" id="CHEBI:74411"/>
        <dbReference type="ChEBI" id="CHEBI:74418"/>
        <dbReference type="ChEBI" id="CHEBI:456215"/>
        <dbReference type="EC" id="2.3.1.234"/>
    </reaction>
</comment>
<comment type="cofactor">
    <cofactor evidence="1">
        <name>Fe(2+)</name>
        <dbReference type="ChEBI" id="CHEBI:29033"/>
    </cofactor>
    <text evidence="1">Binds 1 Fe(2+) ion per subunit.</text>
</comment>
<comment type="subcellular location">
    <subcellularLocation>
        <location evidence="1">Cytoplasm</location>
    </subcellularLocation>
</comment>
<comment type="similarity">
    <text evidence="1">Belongs to the KAE1 / TsaD family.</text>
</comment>
<feature type="chain" id="PRO_1000146049" description="tRNA N6-adenosine threonylcarbamoyltransferase">
    <location>
        <begin position="1"/>
        <end position="336"/>
    </location>
</feature>
<feature type="binding site" evidence="1">
    <location>
        <position position="108"/>
    </location>
    <ligand>
        <name>Fe cation</name>
        <dbReference type="ChEBI" id="CHEBI:24875"/>
    </ligand>
</feature>
<feature type="binding site" evidence="1">
    <location>
        <position position="112"/>
    </location>
    <ligand>
        <name>Fe cation</name>
        <dbReference type="ChEBI" id="CHEBI:24875"/>
    </ligand>
</feature>
<feature type="binding site" evidence="1">
    <location>
        <begin position="129"/>
        <end position="133"/>
    </location>
    <ligand>
        <name>substrate</name>
    </ligand>
</feature>
<feature type="binding site" evidence="1">
    <location>
        <position position="161"/>
    </location>
    <ligand>
        <name>substrate</name>
    </ligand>
</feature>
<feature type="binding site" evidence="1">
    <location>
        <position position="178"/>
    </location>
    <ligand>
        <name>substrate</name>
    </ligand>
</feature>
<feature type="binding site" evidence="1">
    <location>
        <position position="258"/>
    </location>
    <ligand>
        <name>substrate</name>
    </ligand>
</feature>
<feature type="binding site" evidence="1">
    <location>
        <position position="286"/>
    </location>
    <ligand>
        <name>Fe cation</name>
        <dbReference type="ChEBI" id="CHEBI:24875"/>
    </ligand>
</feature>
<dbReference type="EC" id="2.3.1.234" evidence="1"/>
<dbReference type="EMBL" id="CP001014">
    <property type="protein sequence ID" value="ACB40127.1"/>
    <property type="molecule type" value="Genomic_DNA"/>
</dbReference>
<dbReference type="RefSeq" id="WP_012350546.1">
    <property type="nucleotide sequence ID" value="NC_010525.1"/>
</dbReference>
<dbReference type="SMR" id="B1Y8P8"/>
<dbReference type="STRING" id="444157.Tneu_1199"/>
<dbReference type="GeneID" id="6165281"/>
<dbReference type="KEGG" id="tne:Tneu_1199"/>
<dbReference type="eggNOG" id="arCOG01183">
    <property type="taxonomic scope" value="Archaea"/>
</dbReference>
<dbReference type="HOGENOM" id="CLU_023208_2_2_2"/>
<dbReference type="OrthoDB" id="6818at2157"/>
<dbReference type="Proteomes" id="UP000001694">
    <property type="component" value="Chromosome"/>
</dbReference>
<dbReference type="GO" id="GO:0005737">
    <property type="term" value="C:cytoplasm"/>
    <property type="evidence" value="ECO:0007669"/>
    <property type="project" value="UniProtKB-SubCell"/>
</dbReference>
<dbReference type="GO" id="GO:0000408">
    <property type="term" value="C:EKC/KEOPS complex"/>
    <property type="evidence" value="ECO:0007669"/>
    <property type="project" value="InterPro"/>
</dbReference>
<dbReference type="GO" id="GO:0005506">
    <property type="term" value="F:iron ion binding"/>
    <property type="evidence" value="ECO:0007669"/>
    <property type="project" value="UniProtKB-UniRule"/>
</dbReference>
<dbReference type="GO" id="GO:0061711">
    <property type="term" value="F:N(6)-L-threonylcarbamoyladenine synthase activity"/>
    <property type="evidence" value="ECO:0007669"/>
    <property type="project" value="UniProtKB-EC"/>
</dbReference>
<dbReference type="GO" id="GO:0002949">
    <property type="term" value="P:tRNA threonylcarbamoyladenosine modification"/>
    <property type="evidence" value="ECO:0007669"/>
    <property type="project" value="UniProtKB-UniRule"/>
</dbReference>
<dbReference type="Gene3D" id="3.30.420.40">
    <property type="match status" value="2"/>
</dbReference>
<dbReference type="HAMAP" id="MF_01446">
    <property type="entry name" value="Kae1"/>
    <property type="match status" value="1"/>
</dbReference>
<dbReference type="InterPro" id="IPR043129">
    <property type="entry name" value="ATPase_NBD"/>
</dbReference>
<dbReference type="InterPro" id="IPR000905">
    <property type="entry name" value="Gcp-like_dom"/>
</dbReference>
<dbReference type="InterPro" id="IPR017861">
    <property type="entry name" value="KAE1/TsaD"/>
</dbReference>
<dbReference type="InterPro" id="IPR034680">
    <property type="entry name" value="Kae1_archaea_euk"/>
</dbReference>
<dbReference type="InterPro" id="IPR017860">
    <property type="entry name" value="Peptidase_M22_CS"/>
</dbReference>
<dbReference type="NCBIfam" id="TIGR03722">
    <property type="entry name" value="arch_KAE1"/>
    <property type="match status" value="1"/>
</dbReference>
<dbReference type="NCBIfam" id="TIGR00329">
    <property type="entry name" value="gcp_kae1"/>
    <property type="match status" value="1"/>
</dbReference>
<dbReference type="PANTHER" id="PTHR11735">
    <property type="entry name" value="TRNA N6-ADENOSINE THREONYLCARBAMOYLTRANSFERASE"/>
    <property type="match status" value="1"/>
</dbReference>
<dbReference type="PANTHER" id="PTHR11735:SF14">
    <property type="entry name" value="TRNA N6-ADENOSINE THREONYLCARBAMOYLTRANSFERASE"/>
    <property type="match status" value="1"/>
</dbReference>
<dbReference type="Pfam" id="PF00814">
    <property type="entry name" value="TsaD"/>
    <property type="match status" value="1"/>
</dbReference>
<dbReference type="PRINTS" id="PR00789">
    <property type="entry name" value="OSIALOPTASE"/>
</dbReference>
<dbReference type="SUPFAM" id="SSF53067">
    <property type="entry name" value="Actin-like ATPase domain"/>
    <property type="match status" value="1"/>
</dbReference>
<dbReference type="PROSITE" id="PS01016">
    <property type="entry name" value="GLYCOPROTEASE"/>
    <property type="match status" value="1"/>
</dbReference>
<sequence length="336" mass="35547">MLVLGVESTAHTFSIGVVKDGVVLGQLGKTYIPPGGGGIHPREAAEHHARVAPSILRQLLGQLGVGLSDIGAVAYAAGPGLGPALRVGAVLARALAIRLGVPVVPVHHGVAHIEVARYATGACDPLVVLISGGHTVVAGYSDGRYRVFGETLDVAIGNAIDMFAREVGLGFPGVPAVEKCAESAETVVPFPMPIVGQDLSYAGLATHALQLVKRGVPLPVVCRSLVETAYYMLAEVVERALAYTRKREVVVAGGVARSRRLKEILRAVGEEHGAVVKVVPDEYAGDNGAMIALTGYYAYRRGVYTTPEGSFVRQRWRLDSVDVPWFRDLCPVTTYI</sequence>
<accession>B1Y8P8</accession>
<organism>
    <name type="scientific">Pyrobaculum neutrophilum (strain DSM 2338 / JCM 9278 / NBRC 100436 / V24Sta)</name>
    <name type="common">Thermoproteus neutrophilus</name>
    <dbReference type="NCBI Taxonomy" id="444157"/>
    <lineage>
        <taxon>Archaea</taxon>
        <taxon>Thermoproteota</taxon>
        <taxon>Thermoprotei</taxon>
        <taxon>Thermoproteales</taxon>
        <taxon>Thermoproteaceae</taxon>
        <taxon>Pyrobaculum</taxon>
    </lineage>
</organism>
<evidence type="ECO:0000255" key="1">
    <source>
        <dbReference type="HAMAP-Rule" id="MF_01446"/>
    </source>
</evidence>
<name>KAE1_PYRNV</name>
<protein>
    <recommendedName>
        <fullName evidence="1">tRNA N6-adenosine threonylcarbamoyltransferase</fullName>
        <ecNumber evidence="1">2.3.1.234</ecNumber>
    </recommendedName>
    <alternativeName>
        <fullName evidence="1">N6-L-threonylcarbamoyladenine synthase</fullName>
        <shortName evidence="1">t(6)A synthase</shortName>
    </alternativeName>
    <alternativeName>
        <fullName evidence="1">t(6)A37 threonylcarbamoyladenosine biosynthesis protein Kae1</fullName>
    </alternativeName>
    <alternativeName>
        <fullName evidence="1">tRNA threonylcarbamoyladenosine biosynthesis protein Kae1</fullName>
    </alternativeName>
</protein>